<dbReference type="EMBL" id="U79962">
    <property type="protein sequence ID" value="AAB38885.1"/>
    <property type="molecule type" value="mRNA"/>
</dbReference>
<dbReference type="EMBL" id="CH466550">
    <property type="protein sequence ID" value="EDL03967.1"/>
    <property type="molecule type" value="Genomic_DNA"/>
</dbReference>
<dbReference type="EMBL" id="BC002028">
    <property type="protein sequence ID" value="AAH02028.1"/>
    <property type="molecule type" value="mRNA"/>
</dbReference>
<dbReference type="CCDS" id="CCDS27886.1"/>
<dbReference type="RefSeq" id="NP_033345.2">
    <property type="nucleotide sequence ID" value="NM_009319.4"/>
</dbReference>
<dbReference type="RefSeq" id="XP_030104313.1">
    <property type="nucleotide sequence ID" value="XM_030248453.2"/>
</dbReference>
<dbReference type="PDB" id="7ZPJ">
    <property type="method" value="EM"/>
    <property type="resolution" value="3.81 A"/>
    <property type="chains" value="D=1-365"/>
</dbReference>
<dbReference type="PDB" id="7ZPK">
    <property type="method" value="EM"/>
    <property type="resolution" value="3.81 A"/>
    <property type="chains" value="C=1-365"/>
</dbReference>
<dbReference type="PDBsum" id="7ZPJ"/>
<dbReference type="PDBsum" id="7ZPK"/>
<dbReference type="EMDB" id="EMD-14855"/>
<dbReference type="EMDB" id="EMD-14856"/>
<dbReference type="SMR" id="P97473"/>
<dbReference type="BioGRID" id="203969">
    <property type="interactions" value="5"/>
</dbReference>
<dbReference type="ComplexPortal" id="CPX-135">
    <property type="entry name" value="RISC-loading complex, TARBP2 variant"/>
</dbReference>
<dbReference type="FunCoup" id="P97473">
    <property type="interactions" value="2538"/>
</dbReference>
<dbReference type="IntAct" id="P97473">
    <property type="interactions" value="3"/>
</dbReference>
<dbReference type="STRING" id="10090.ENSMUSP00000023813"/>
<dbReference type="GlyGen" id="P97473">
    <property type="glycosylation" value="1 site"/>
</dbReference>
<dbReference type="iPTMnet" id="P97473"/>
<dbReference type="PhosphoSitePlus" id="P97473"/>
<dbReference type="SwissPalm" id="P97473"/>
<dbReference type="PaxDb" id="10090-ENSMUSP00000023813"/>
<dbReference type="PeptideAtlas" id="P97473"/>
<dbReference type="ProteomicsDB" id="298210"/>
<dbReference type="Pumba" id="P97473"/>
<dbReference type="Antibodypedia" id="15253">
    <property type="antibodies" value="421 antibodies from 35 providers"/>
</dbReference>
<dbReference type="DNASU" id="21357"/>
<dbReference type="Ensembl" id="ENSMUST00000023813.9">
    <property type="protein sequence ID" value="ENSMUSP00000023813.3"/>
    <property type="gene ID" value="ENSMUSG00000023051.13"/>
</dbReference>
<dbReference type="GeneID" id="21357"/>
<dbReference type="KEGG" id="mmu:21357"/>
<dbReference type="UCSC" id="uc007xwf.3">
    <property type="organism name" value="mouse"/>
</dbReference>
<dbReference type="AGR" id="MGI:103027"/>
<dbReference type="CTD" id="6895"/>
<dbReference type="MGI" id="MGI:103027">
    <property type="gene designation" value="Tarbp2"/>
</dbReference>
<dbReference type="VEuPathDB" id="HostDB:ENSMUSG00000023051"/>
<dbReference type="eggNOG" id="KOG3732">
    <property type="taxonomic scope" value="Eukaryota"/>
</dbReference>
<dbReference type="GeneTree" id="ENSGT00940000157748"/>
<dbReference type="HOGENOM" id="CLU_048292_2_0_1"/>
<dbReference type="InParanoid" id="P97473"/>
<dbReference type="OMA" id="GYSCTWD"/>
<dbReference type="OrthoDB" id="10056847at2759"/>
<dbReference type="PhylomeDB" id="P97473"/>
<dbReference type="TreeFam" id="TF315953"/>
<dbReference type="Reactome" id="R-MMU-203927">
    <property type="pathway name" value="MicroRNA (miRNA) biogenesis"/>
</dbReference>
<dbReference type="Reactome" id="R-MMU-426486">
    <property type="pathway name" value="Small interfering RNA (siRNA) biogenesis"/>
</dbReference>
<dbReference type="Reactome" id="R-MMU-9833482">
    <property type="pathway name" value="PKR-mediated signaling"/>
</dbReference>
<dbReference type="BioGRID-ORCS" id="21357">
    <property type="hits" value="5 hits in 77 CRISPR screens"/>
</dbReference>
<dbReference type="ChiTaRS" id="Tarbp2">
    <property type="organism name" value="mouse"/>
</dbReference>
<dbReference type="PRO" id="PR:P97473"/>
<dbReference type="Proteomes" id="UP000000589">
    <property type="component" value="Chromosome 15"/>
</dbReference>
<dbReference type="RNAct" id="P97473">
    <property type="molecule type" value="protein"/>
</dbReference>
<dbReference type="Bgee" id="ENSMUSG00000023051">
    <property type="expression patterns" value="Expressed in spermatocyte and 70 other cell types or tissues"/>
</dbReference>
<dbReference type="ExpressionAtlas" id="P97473">
    <property type="expression patterns" value="baseline and differential"/>
</dbReference>
<dbReference type="GO" id="GO:0005737">
    <property type="term" value="C:cytoplasm"/>
    <property type="evidence" value="ECO:0000250"/>
    <property type="project" value="UniProtKB"/>
</dbReference>
<dbReference type="GO" id="GO:0016604">
    <property type="term" value="C:nuclear body"/>
    <property type="evidence" value="ECO:0007669"/>
    <property type="project" value="Ensembl"/>
</dbReference>
<dbReference type="GO" id="GO:0048471">
    <property type="term" value="C:perinuclear region of cytoplasm"/>
    <property type="evidence" value="ECO:0007669"/>
    <property type="project" value="UniProtKB-SubCell"/>
</dbReference>
<dbReference type="GO" id="GO:0016442">
    <property type="term" value="C:RISC complex"/>
    <property type="evidence" value="ECO:0000314"/>
    <property type="project" value="MGI"/>
</dbReference>
<dbReference type="GO" id="GO:0070578">
    <property type="term" value="C:RISC-loading complex"/>
    <property type="evidence" value="ECO:0000353"/>
    <property type="project" value="ComplexPortal"/>
</dbReference>
<dbReference type="GO" id="GO:0003725">
    <property type="term" value="F:double-stranded RNA binding"/>
    <property type="evidence" value="ECO:0007669"/>
    <property type="project" value="Ensembl"/>
</dbReference>
<dbReference type="GO" id="GO:0019899">
    <property type="term" value="F:enzyme binding"/>
    <property type="evidence" value="ECO:0007669"/>
    <property type="project" value="Ensembl"/>
</dbReference>
<dbReference type="GO" id="GO:0035198">
    <property type="term" value="F:miRNA binding"/>
    <property type="evidence" value="ECO:0007669"/>
    <property type="project" value="UniProtKB-UniRule"/>
</dbReference>
<dbReference type="GO" id="GO:0070883">
    <property type="term" value="F:pre-miRNA binding"/>
    <property type="evidence" value="ECO:0007669"/>
    <property type="project" value="Ensembl"/>
</dbReference>
<dbReference type="GO" id="GO:0042803">
    <property type="term" value="F:protein homodimerization activity"/>
    <property type="evidence" value="ECO:0007669"/>
    <property type="project" value="UniProtKB-UniRule"/>
</dbReference>
<dbReference type="GO" id="GO:0140311">
    <property type="term" value="F:protein sequestering activity"/>
    <property type="evidence" value="ECO:0007669"/>
    <property type="project" value="Ensembl"/>
</dbReference>
<dbReference type="GO" id="GO:0035197">
    <property type="term" value="F:siRNA binding"/>
    <property type="evidence" value="ECO:0000250"/>
    <property type="project" value="UniProtKB"/>
</dbReference>
<dbReference type="GO" id="GO:0098795">
    <property type="term" value="P:global gene silencing by mRNA cleavage"/>
    <property type="evidence" value="ECO:0000250"/>
    <property type="project" value="UniProtKB"/>
</dbReference>
<dbReference type="GO" id="GO:0035196">
    <property type="term" value="P:miRNA processing"/>
    <property type="evidence" value="ECO:0000266"/>
    <property type="project" value="ComplexPortal"/>
</dbReference>
<dbReference type="GO" id="GO:0035264">
    <property type="term" value="P:multicellular organism growth"/>
    <property type="evidence" value="ECO:0000315"/>
    <property type="project" value="MGI"/>
</dbReference>
<dbReference type="GO" id="GO:0039532">
    <property type="term" value="P:negative regulation of cytoplasmic pattern recognition receptor signaling pathway"/>
    <property type="evidence" value="ECO:0007669"/>
    <property type="project" value="Ensembl"/>
</dbReference>
<dbReference type="GO" id="GO:0050689">
    <property type="term" value="P:negative regulation of defense response to virus by host"/>
    <property type="evidence" value="ECO:0000250"/>
    <property type="project" value="UniProtKB"/>
</dbReference>
<dbReference type="GO" id="GO:0061351">
    <property type="term" value="P:neural precursor cell proliferation"/>
    <property type="evidence" value="ECO:0000314"/>
    <property type="project" value="MGI"/>
</dbReference>
<dbReference type="GO" id="GO:0051149">
    <property type="term" value="P:positive regulation of muscle cell differentiation"/>
    <property type="evidence" value="ECO:0000315"/>
    <property type="project" value="MGI"/>
</dbReference>
<dbReference type="GO" id="GO:0045727">
    <property type="term" value="P:positive regulation of translation"/>
    <property type="evidence" value="ECO:0000315"/>
    <property type="project" value="MGI"/>
</dbReference>
<dbReference type="GO" id="GO:0045070">
    <property type="term" value="P:positive regulation of viral genome replication"/>
    <property type="evidence" value="ECO:0000250"/>
    <property type="project" value="UniProtKB"/>
</dbReference>
<dbReference type="GO" id="GO:0031054">
    <property type="term" value="P:pre-miRNA processing"/>
    <property type="evidence" value="ECO:0000250"/>
    <property type="project" value="UniProtKB"/>
</dbReference>
<dbReference type="GO" id="GO:1903798">
    <property type="term" value="P:regulation of miRNA processing"/>
    <property type="evidence" value="ECO:0000315"/>
    <property type="project" value="MGI"/>
</dbReference>
<dbReference type="GO" id="GO:0070921">
    <property type="term" value="P:regulation of siRNA processing"/>
    <property type="evidence" value="ECO:0007669"/>
    <property type="project" value="InterPro"/>
</dbReference>
<dbReference type="GO" id="GO:0046782">
    <property type="term" value="P:regulation of viral transcription"/>
    <property type="evidence" value="ECO:0000250"/>
    <property type="project" value="UniProtKB"/>
</dbReference>
<dbReference type="GO" id="GO:0070922">
    <property type="term" value="P:RISC complex assembly"/>
    <property type="evidence" value="ECO:0000266"/>
    <property type="project" value="ComplexPortal"/>
</dbReference>
<dbReference type="GO" id="GO:0007338">
    <property type="term" value="P:single fertilization"/>
    <property type="evidence" value="ECO:0000315"/>
    <property type="project" value="MGI"/>
</dbReference>
<dbReference type="GO" id="GO:0030422">
    <property type="term" value="P:siRNA processing"/>
    <property type="evidence" value="ECO:0000250"/>
    <property type="project" value="UniProtKB"/>
</dbReference>
<dbReference type="GO" id="GO:0043403">
    <property type="term" value="P:skeletal muscle tissue regeneration"/>
    <property type="evidence" value="ECO:0000315"/>
    <property type="project" value="MGI"/>
</dbReference>
<dbReference type="GO" id="GO:0007286">
    <property type="term" value="P:spermatid development"/>
    <property type="evidence" value="ECO:0000315"/>
    <property type="project" value="MGI"/>
</dbReference>
<dbReference type="CDD" id="cd19890">
    <property type="entry name" value="DSRM_TARBP2_rpt1"/>
    <property type="match status" value="1"/>
</dbReference>
<dbReference type="CDD" id="cd10844">
    <property type="entry name" value="DSRM_TARBP2_rpt2"/>
    <property type="match status" value="1"/>
</dbReference>
<dbReference type="CDD" id="cd19893">
    <property type="entry name" value="DSRM_TARBP2_rpt3"/>
    <property type="match status" value="1"/>
</dbReference>
<dbReference type="FunFam" id="3.30.160.20:FF:000019">
    <property type="entry name" value="RISC-loading complex subunit TARBP2"/>
    <property type="match status" value="1"/>
</dbReference>
<dbReference type="FunFam" id="3.30.160.20:FF:000120">
    <property type="entry name" value="RISC-loading complex subunit TARBP2"/>
    <property type="match status" value="1"/>
</dbReference>
<dbReference type="FunFam" id="3.30.160.20:FF:000018">
    <property type="entry name" value="RISC-loading complex subunit TARBP2 isoform X3"/>
    <property type="match status" value="1"/>
</dbReference>
<dbReference type="Gene3D" id="3.30.160.20">
    <property type="match status" value="3"/>
</dbReference>
<dbReference type="HAMAP" id="MF_03034">
    <property type="entry name" value="TRBP2"/>
    <property type="match status" value="1"/>
</dbReference>
<dbReference type="InterPro" id="IPR014720">
    <property type="entry name" value="dsRBD_dom"/>
</dbReference>
<dbReference type="InterPro" id="IPR051247">
    <property type="entry name" value="RLC_Component"/>
</dbReference>
<dbReference type="InterPro" id="IPR028605">
    <property type="entry name" value="TRBP2"/>
</dbReference>
<dbReference type="InterPro" id="IPR044469">
    <property type="entry name" value="TRBP2_DSRM_1"/>
</dbReference>
<dbReference type="InterPro" id="IPR044470">
    <property type="entry name" value="TRBP2_DSRM_2"/>
</dbReference>
<dbReference type="InterPro" id="IPR044471">
    <property type="entry name" value="TRBP2_DSRM_3"/>
</dbReference>
<dbReference type="PANTHER" id="PTHR46205">
    <property type="entry name" value="LOQUACIOUS, ISOFORM B"/>
    <property type="match status" value="1"/>
</dbReference>
<dbReference type="PANTHER" id="PTHR46205:SF1">
    <property type="entry name" value="RISC-LOADING COMPLEX SUBUNIT TARBP2"/>
    <property type="match status" value="1"/>
</dbReference>
<dbReference type="Pfam" id="PF00035">
    <property type="entry name" value="dsrm"/>
    <property type="match status" value="2"/>
</dbReference>
<dbReference type="SMART" id="SM00358">
    <property type="entry name" value="DSRM"/>
    <property type="match status" value="3"/>
</dbReference>
<dbReference type="SUPFAM" id="SSF54768">
    <property type="entry name" value="dsRNA-binding domain-like"/>
    <property type="match status" value="3"/>
</dbReference>
<dbReference type="PROSITE" id="PS50137">
    <property type="entry name" value="DS_RBD"/>
    <property type="match status" value="3"/>
</dbReference>
<feature type="chain" id="PRO_0000065623" description="RISC-loading complex subunit TARBP2">
    <location>
        <begin position="1"/>
        <end position="365"/>
    </location>
</feature>
<feature type="domain" description="DRBM 1" evidence="2">
    <location>
        <begin position="30"/>
        <end position="97"/>
    </location>
</feature>
<feature type="domain" description="DRBM 2" evidence="2">
    <location>
        <begin position="158"/>
        <end position="226"/>
    </location>
</feature>
<feature type="domain" description="DRBM 3" evidence="2">
    <location>
        <begin position="292"/>
        <end position="360"/>
    </location>
</feature>
<feature type="region of interest" description="Sufficient for interaction with PRKRA" evidence="2">
    <location>
        <begin position="22"/>
        <end position="105"/>
    </location>
</feature>
<feature type="region of interest" description="Sufficient for interaction with PRKRA" evidence="2">
    <location>
        <begin position="151"/>
        <end position="233"/>
    </location>
</feature>
<feature type="region of interest" description="Sufficient for interaction with DICER1" evidence="2">
    <location>
        <begin position="227"/>
        <end position="365"/>
    </location>
</feature>
<feature type="region of interest" description="Sufficient for interaction with PRKRA" evidence="2">
    <location>
        <begin position="286"/>
        <end position="365"/>
    </location>
</feature>
<feature type="modified residue" description="Phosphoserine" evidence="1">
    <location>
        <position position="151"/>
    </location>
</feature>
<feature type="sequence conflict" description="In Ref. 1; AAB38885." evidence="7" ref="1">
    <original>A</original>
    <variation>E</variation>
    <location>
        <position position="53"/>
    </location>
</feature>
<feature type="sequence conflict" description="In Ref. 1; AAB38885." evidence="7" ref="1">
    <original>Q</original>
    <variation>T</variation>
    <location>
        <position position="76"/>
    </location>
</feature>
<feature type="sequence conflict" description="In Ref. 1; AAB38885." evidence="7" ref="1">
    <original>F</original>
    <variation>L</variation>
    <location>
        <position position="111"/>
    </location>
</feature>
<feature type="sequence conflict" description="In Ref. 1; AAB38885." evidence="7" ref="1">
    <original>R</original>
    <variation>H</variation>
    <location>
        <position position="258"/>
    </location>
</feature>
<feature type="sequence conflict" description="In Ref. 1; AAB38885." evidence="7" ref="1">
    <original>T</original>
    <variation>A</variation>
    <location>
        <position position="334"/>
    </location>
</feature>
<gene>
    <name type="primary">Tarbp2</name>
    <name type="synonym">Prbp</name>
</gene>
<accession>P97473</accession>
<accession>Q99M41</accession>
<reference key="1">
    <citation type="journal article" date="1996" name="Mol. Cell. Biol.">
        <title>A testis cytoplasmic RNA-binding protein that has the properties of a translational repressor.</title>
        <authorList>
            <person name="Lee K."/>
            <person name="Fajardo M.A."/>
            <person name="Braun R.E."/>
        </authorList>
    </citation>
    <scope>NUCLEOTIDE SEQUENCE [MRNA]</scope>
    <scope>FUNCTION</scope>
    <scope>SUBCELLULAR LOCATION</scope>
    <source>
        <tissue>Testis</tissue>
    </source>
</reference>
<reference key="2">
    <citation type="submission" date="2005-07" db="EMBL/GenBank/DDBJ databases">
        <authorList>
            <person name="Mural R.J."/>
            <person name="Adams M.D."/>
            <person name="Myers E.W."/>
            <person name="Smith H.O."/>
            <person name="Venter J.C."/>
        </authorList>
    </citation>
    <scope>NUCLEOTIDE SEQUENCE [LARGE SCALE GENOMIC DNA]</scope>
</reference>
<reference key="3">
    <citation type="journal article" date="2004" name="Genome Res.">
        <title>The status, quality, and expansion of the NIH full-length cDNA project: the Mammalian Gene Collection (MGC).</title>
        <authorList>
            <consortium name="The MGC Project Team"/>
        </authorList>
    </citation>
    <scope>NUCLEOTIDE SEQUENCE [LARGE SCALE MRNA]</scope>
    <source>
        <strain>FVB/N</strain>
        <tissue>Mammary tumor</tissue>
    </source>
</reference>
<reference key="4">
    <citation type="journal article" date="2005" name="EMBO Rep.">
        <title>TRBP, a regulator of cellular PKR and HIV-1 virus expression, interacts with Dicer and functions in RNA silencing.</title>
        <authorList>
            <person name="Haase A.D."/>
            <person name="Jaskiewicz L."/>
            <person name="Zhang H."/>
            <person name="Laine S."/>
            <person name="Sack R."/>
            <person name="Gatignol A."/>
            <person name="Filipowicz W."/>
        </authorList>
    </citation>
    <scope>INTERACTION WITH DICER1</scope>
</reference>
<reference key="5">
    <citation type="journal article" date="2007" name="J. Biol. Chem.">
        <title>Human TRBP and PACT directly interact with each other and associate with dicer to facilitate the production of small interfering RNA.</title>
        <authorList>
            <person name="Kok K.H."/>
            <person name="Ng M.-H."/>
            <person name="Ching Y.-P."/>
            <person name="Jin D.-Y."/>
        </authorList>
    </citation>
    <scope>INTERACTION WITH DICER1 AND PRKRA</scope>
</reference>
<reference key="6">
    <citation type="journal article" date="2010" name="Cell">
        <title>A tissue-specific atlas of mouse protein phosphorylation and expression.</title>
        <authorList>
            <person name="Huttlin E.L."/>
            <person name="Jedrychowski M.P."/>
            <person name="Elias J.E."/>
            <person name="Goswami T."/>
            <person name="Rad R."/>
            <person name="Beausoleil S.A."/>
            <person name="Villen J."/>
            <person name="Haas W."/>
            <person name="Sowa M.E."/>
            <person name="Gygi S.P."/>
        </authorList>
    </citation>
    <scope>IDENTIFICATION BY MASS SPECTROMETRY [LARGE SCALE ANALYSIS]</scope>
    <source>
        <tissue>Testis</tissue>
    </source>
</reference>
<reference key="7">
    <citation type="journal article" date="2012" name="Cell">
        <title>Dicer partner proteins tune the length of mature miRNAs in flies and mammals.</title>
        <authorList>
            <person name="Fukunaga R."/>
            <person name="Han B.W."/>
            <person name="Hung J.H."/>
            <person name="Xu J."/>
            <person name="Weng Z."/>
            <person name="Zamore P.D."/>
        </authorList>
    </citation>
    <scope>FUNCTION</scope>
</reference>
<sequence>MSEEDQGSGTTTGCGLPSIEQMLAANPGKTPISLLQEYGTRIGKTPVYDLLKAEGQAHQPNFTFRVTVGDTSCTGQGPSKKAAKHKAAEVALKHLKGGSMLEPALEDSSSFSLLDSSPPEDTPVVAAEAAAPVPSAVLTRSPPMEMQPPVSPQQSECNPVGALQELVVQKGWRLPEYMVTQESGPAHRKEFTMTCRVERFIEIGSGTSKKLAKRNAAAKMLLRVHTVPLDARDGNEAEPDDDHFSIGVSSRLDGLRNRGPGCTWDSLRNSVGEKILSLRSCSVGSLGALGSACCSVLSELSEEQAFHVSYLDIEELSLSGLCQCLVELSTQPATVCYGSATTREAARGDAAHRALQYLRIMAGSK</sequence>
<keyword id="KW-0002">3D-structure</keyword>
<keyword id="KW-0963">Cytoplasm</keyword>
<keyword id="KW-0539">Nucleus</keyword>
<keyword id="KW-0597">Phosphoprotein</keyword>
<keyword id="KW-1185">Reference proteome</keyword>
<keyword id="KW-0677">Repeat</keyword>
<keyword id="KW-0694">RNA-binding</keyword>
<keyword id="KW-0943">RNA-mediated gene silencing</keyword>
<keyword id="KW-0810">Translation regulation</keyword>
<comment type="function">
    <text evidence="2 5 6">Required for formation of the RNA induced silencing complex (RISC). Component of the RISC loading complex (RLC), also known as the micro-RNA (miRNA) loading complex (miRLC), which is composed of DICER1, AGO2 and TARBP2. Within the RLC/miRLC, DICER1 and TARBP2 are required to process precursor miRNAs (pre-miRNAs) to mature miRNAs and then load them onto AGO2. AGO2 bound to the mature miRNA constitutes the minimal RISC and may subsequently dissociate from DICER1 and TARBP2. May also play a role in the production of short interfering RNAs (siRNAs) from double-stranded RNA (dsRNA) by DICER1 (By similarity). Binds in vitro to the PRM1 3'-UTR (PubMed:8649414). Seems to act as a repressor of translation (PubMed:8649414). For some pre-miRNA substrates, may also alter the choice of cleavage site by DICER1 (PubMed:23063653). Negatively regulates IRF7-mediated IFN-beta signaling triggered by viral infection by inhibiting the phosphorylation of IRF7 and promoting its 'Lys'-48-linked ubiquitination and degradation (By similarity).</text>
</comment>
<comment type="subunit">
    <text evidence="2 3 4">Self-associates. Component of the RISC loading complex (RLC), or micro-RNA (miRNA) loading complex (miRLC), which is composed of DICER1, AGO2 and TARBP2. Note that the trimeric RLC/miRLC is also referred to as RISC. Interacts with EIF2AK2/PKR and inhibits its protein kinase activity. Interacts with DHX9 (By similarity). Interacts with DICER1 and PRKRA (PubMed:16142218, PubMed:17452327). Interacts with DICER1, AGO2, MOV10, EIF6 and RPL7A (60S ribosome subunit); they form a large RNA-induced silencing complex (RISC) (By similarity). Interacts with IRF7; this interaction prevents IRF7 phosphorylation and activation (By similarity).</text>
</comment>
<comment type="subcellular location">
    <subcellularLocation>
        <location evidence="2 6">Cytoplasm</location>
    </subcellularLocation>
    <subcellularLocation>
        <location evidence="2">Cytoplasm</location>
        <location evidence="2">Perinuclear region</location>
    </subcellularLocation>
    <subcellularLocation>
        <location evidence="2 6">Nucleus</location>
    </subcellularLocation>
</comment>
<comment type="similarity">
    <text evidence="2">Belongs to the TARBP2 family.</text>
</comment>
<name>TRBP2_MOUSE</name>
<organism>
    <name type="scientific">Mus musculus</name>
    <name type="common">Mouse</name>
    <dbReference type="NCBI Taxonomy" id="10090"/>
    <lineage>
        <taxon>Eukaryota</taxon>
        <taxon>Metazoa</taxon>
        <taxon>Chordata</taxon>
        <taxon>Craniata</taxon>
        <taxon>Vertebrata</taxon>
        <taxon>Euteleostomi</taxon>
        <taxon>Mammalia</taxon>
        <taxon>Eutheria</taxon>
        <taxon>Euarchontoglires</taxon>
        <taxon>Glires</taxon>
        <taxon>Rodentia</taxon>
        <taxon>Myomorpha</taxon>
        <taxon>Muroidea</taxon>
        <taxon>Muridae</taxon>
        <taxon>Murinae</taxon>
        <taxon>Mus</taxon>
        <taxon>Mus</taxon>
    </lineage>
</organism>
<proteinExistence type="evidence at protein level"/>
<protein>
    <recommendedName>
        <fullName evidence="2">RISC-loading complex subunit TARBP2</fullName>
    </recommendedName>
    <alternativeName>
        <fullName>Protamine-1 RNA-binding protein</fullName>
        <shortName>PRM-1 RNA-binding protein</shortName>
    </alternativeName>
    <alternativeName>
        <fullName>TAR RNA-binding protein 2</fullName>
    </alternativeName>
</protein>
<evidence type="ECO:0000250" key="1">
    <source>
        <dbReference type="UniProtKB" id="Q15633"/>
    </source>
</evidence>
<evidence type="ECO:0000255" key="2">
    <source>
        <dbReference type="HAMAP-Rule" id="MF_03034"/>
    </source>
</evidence>
<evidence type="ECO:0000269" key="3">
    <source>
    </source>
</evidence>
<evidence type="ECO:0000269" key="4">
    <source>
    </source>
</evidence>
<evidence type="ECO:0000269" key="5">
    <source>
    </source>
</evidence>
<evidence type="ECO:0000269" key="6">
    <source>
    </source>
</evidence>
<evidence type="ECO:0000305" key="7"/>